<feature type="chain" id="PRO_0000114254" description="Chromosomal replication initiator protein DnaA">
    <location>
        <begin position="1"/>
        <end position="460"/>
    </location>
</feature>
<feature type="region of interest" description="Domain I, interacts with DnaA modulators" evidence="1">
    <location>
        <begin position="1"/>
        <end position="84"/>
    </location>
</feature>
<feature type="region of interest" description="Domain II" evidence="1">
    <location>
        <begin position="84"/>
        <end position="123"/>
    </location>
</feature>
<feature type="region of interest" description="Domain III, AAA+ region" evidence="1">
    <location>
        <begin position="124"/>
        <end position="340"/>
    </location>
</feature>
<feature type="region of interest" description="Domain IV, binds dsDNA" evidence="1">
    <location>
        <begin position="341"/>
        <end position="460"/>
    </location>
</feature>
<feature type="binding site" evidence="1">
    <location>
        <position position="168"/>
    </location>
    <ligand>
        <name>ATP</name>
        <dbReference type="ChEBI" id="CHEBI:30616"/>
    </ligand>
</feature>
<feature type="binding site" evidence="1">
    <location>
        <position position="170"/>
    </location>
    <ligand>
        <name>ATP</name>
        <dbReference type="ChEBI" id="CHEBI:30616"/>
    </ligand>
</feature>
<feature type="binding site" evidence="1">
    <location>
        <position position="171"/>
    </location>
    <ligand>
        <name>ATP</name>
        <dbReference type="ChEBI" id="CHEBI:30616"/>
    </ligand>
</feature>
<feature type="binding site" evidence="1">
    <location>
        <position position="172"/>
    </location>
    <ligand>
        <name>ATP</name>
        <dbReference type="ChEBI" id="CHEBI:30616"/>
    </ligand>
</feature>
<keyword id="KW-0067">ATP-binding</keyword>
<keyword id="KW-0963">Cytoplasm</keyword>
<keyword id="KW-0235">DNA replication</keyword>
<keyword id="KW-0238">DNA-binding</keyword>
<keyword id="KW-0446">Lipid-binding</keyword>
<keyword id="KW-0547">Nucleotide-binding</keyword>
<keyword id="KW-1185">Reference proteome</keyword>
<name>DNAA_SHEON</name>
<comment type="function">
    <text evidence="1">Plays an essential role in the initiation and regulation of chromosomal replication. ATP-DnaA binds to the origin of replication (oriC) to initiate formation of the DNA replication initiation complex once per cell cycle. Binds the DnaA box (a 9 base pair repeat at the origin) and separates the double-stranded (ds)DNA. Forms a right-handed helical filament on oriC DNA; dsDNA binds to the exterior of the filament while single-stranded (ss)DNA is stabiized in the filament's interior. The ATP-DnaA-oriC complex binds and stabilizes one strand of the AT-rich DNA unwinding element (DUE), permitting loading of DNA polymerase. After initiation quickly degrades to an ADP-DnaA complex that is not apt for DNA replication. Binds acidic phospholipids.</text>
</comment>
<comment type="subunit">
    <text evidence="1">Oligomerizes as a right-handed, spiral filament on DNA at oriC.</text>
</comment>
<comment type="subcellular location">
    <subcellularLocation>
        <location evidence="1">Cytoplasm</location>
    </subcellularLocation>
</comment>
<comment type="domain">
    <text evidence="1">Domain I is involved in oligomerization and binding regulators, domain II is flexibile and of varying length in different bacteria, domain III forms the AAA+ region, while domain IV binds dsDNA.</text>
</comment>
<comment type="similarity">
    <text evidence="1">Belongs to the DnaA family.</text>
</comment>
<sequence>MAVSLWQQCIGRLQDELSAQQFSMWIRPLQAEMDGDTLVLYAPNRFVLDWVRDKYINIINQFFTEQMGNDAPKLRFDIGSRPSAKKPEPAPVAAVRVPSPQTKASVGTAFNTTEPVANTNHRSNINPTYQFDNFVEGKSNQLGKAAALQVAENPGGAYNPLFLYGGTGLGKTHLLHAVGNGIIKNNPNAKVVYMHSERFVQDMVKALQNNAIEEFKRYYRSVDALFIDDIQFFANKDRSQEEFFHTFNALLEGNHQIILTSDRYPKEIDGVEDRLKSRFGWGLTVAIEPPELETRVAILMRKAQESGINLPDEVAFFIAKRLRSNVRELEGALNRVIANANFTGRPITIDFVREALRDLLALQEKLVTIDNIQKTVAEYYKIKMADMLSKRRSRSVARPRQVAMALSKELTNQSLPEIGDAFGGRDHTTVLHACRKIAQLREESHDIKEDYANLIRTLSS</sequence>
<reference key="1">
    <citation type="journal article" date="2002" name="Nat. Biotechnol.">
        <title>Genome sequence of the dissimilatory metal ion-reducing bacterium Shewanella oneidensis.</title>
        <authorList>
            <person name="Heidelberg J.F."/>
            <person name="Paulsen I.T."/>
            <person name="Nelson K.E."/>
            <person name="Gaidos E.J."/>
            <person name="Nelson W.C."/>
            <person name="Read T.D."/>
            <person name="Eisen J.A."/>
            <person name="Seshadri R."/>
            <person name="Ward N.L."/>
            <person name="Methe B.A."/>
            <person name="Clayton R.A."/>
            <person name="Meyer T."/>
            <person name="Tsapin A."/>
            <person name="Scott J."/>
            <person name="Beanan M.J."/>
            <person name="Brinkac L.M."/>
            <person name="Daugherty S.C."/>
            <person name="DeBoy R.T."/>
            <person name="Dodson R.J."/>
            <person name="Durkin A.S."/>
            <person name="Haft D.H."/>
            <person name="Kolonay J.F."/>
            <person name="Madupu R."/>
            <person name="Peterson J.D."/>
            <person name="Umayam L.A."/>
            <person name="White O."/>
            <person name="Wolf A.M."/>
            <person name="Vamathevan J.J."/>
            <person name="Weidman J.F."/>
            <person name="Impraim M."/>
            <person name="Lee K."/>
            <person name="Berry K.J."/>
            <person name="Lee C."/>
            <person name="Mueller J."/>
            <person name="Khouri H.M."/>
            <person name="Gill J."/>
            <person name="Utterback T.R."/>
            <person name="McDonald L.A."/>
            <person name="Feldblyum T.V."/>
            <person name="Smith H.O."/>
            <person name="Venter J.C."/>
            <person name="Nealson K.H."/>
            <person name="Fraser C.M."/>
        </authorList>
    </citation>
    <scope>NUCLEOTIDE SEQUENCE [LARGE SCALE GENOMIC DNA]</scope>
    <source>
        <strain>ATCC 700550 / JCM 31522 / CIP 106686 / LMG 19005 / NCIMB 14063 / MR-1</strain>
    </source>
</reference>
<evidence type="ECO:0000255" key="1">
    <source>
        <dbReference type="HAMAP-Rule" id="MF_00377"/>
    </source>
</evidence>
<dbReference type="EMBL" id="AE014299">
    <property type="protein sequence ID" value="AAN53095.1"/>
    <property type="molecule type" value="Genomic_DNA"/>
</dbReference>
<dbReference type="RefSeq" id="NP_715650.1">
    <property type="nucleotide sequence ID" value="NC_004347.2"/>
</dbReference>
<dbReference type="RefSeq" id="WP_011070424.1">
    <property type="nucleotide sequence ID" value="NC_004347.2"/>
</dbReference>
<dbReference type="SMR" id="Q8EKT2"/>
<dbReference type="STRING" id="211586.SO_0008"/>
<dbReference type="PaxDb" id="211586-SO_0008"/>
<dbReference type="KEGG" id="son:SO_0008"/>
<dbReference type="PATRIC" id="fig|211586.12.peg.8"/>
<dbReference type="eggNOG" id="COG0593">
    <property type="taxonomic scope" value="Bacteria"/>
</dbReference>
<dbReference type="HOGENOM" id="CLU_026910_0_1_6"/>
<dbReference type="OrthoDB" id="9807019at2"/>
<dbReference type="PhylomeDB" id="Q8EKT2"/>
<dbReference type="BioCyc" id="SONE211586:G1GMP-8-MONOMER"/>
<dbReference type="Proteomes" id="UP000008186">
    <property type="component" value="Chromosome"/>
</dbReference>
<dbReference type="GO" id="GO:0005737">
    <property type="term" value="C:cytoplasm"/>
    <property type="evidence" value="ECO:0007669"/>
    <property type="project" value="UniProtKB-SubCell"/>
</dbReference>
<dbReference type="GO" id="GO:0005886">
    <property type="term" value="C:plasma membrane"/>
    <property type="evidence" value="ECO:0000318"/>
    <property type="project" value="GO_Central"/>
</dbReference>
<dbReference type="GO" id="GO:0005524">
    <property type="term" value="F:ATP binding"/>
    <property type="evidence" value="ECO:0007669"/>
    <property type="project" value="UniProtKB-UniRule"/>
</dbReference>
<dbReference type="GO" id="GO:0016887">
    <property type="term" value="F:ATP hydrolysis activity"/>
    <property type="evidence" value="ECO:0007669"/>
    <property type="project" value="InterPro"/>
</dbReference>
<dbReference type="GO" id="GO:0003688">
    <property type="term" value="F:DNA replication origin binding"/>
    <property type="evidence" value="ECO:0000318"/>
    <property type="project" value="GO_Central"/>
</dbReference>
<dbReference type="GO" id="GO:0008289">
    <property type="term" value="F:lipid binding"/>
    <property type="evidence" value="ECO:0007669"/>
    <property type="project" value="UniProtKB-KW"/>
</dbReference>
<dbReference type="GO" id="GO:0006260">
    <property type="term" value="P:DNA replication"/>
    <property type="evidence" value="ECO:0000318"/>
    <property type="project" value="GO_Central"/>
</dbReference>
<dbReference type="GO" id="GO:0006270">
    <property type="term" value="P:DNA replication initiation"/>
    <property type="evidence" value="ECO:0000318"/>
    <property type="project" value="GO_Central"/>
</dbReference>
<dbReference type="GO" id="GO:0006275">
    <property type="term" value="P:regulation of DNA replication"/>
    <property type="evidence" value="ECO:0007669"/>
    <property type="project" value="UniProtKB-UniRule"/>
</dbReference>
<dbReference type="CDD" id="cd00009">
    <property type="entry name" value="AAA"/>
    <property type="match status" value="1"/>
</dbReference>
<dbReference type="CDD" id="cd06571">
    <property type="entry name" value="Bac_DnaA_C"/>
    <property type="match status" value="1"/>
</dbReference>
<dbReference type="FunFam" id="1.10.1750.10:FF:000001">
    <property type="entry name" value="Chromosomal replication initiator protein DnaA"/>
    <property type="match status" value="1"/>
</dbReference>
<dbReference type="FunFam" id="1.10.8.60:FF:000003">
    <property type="entry name" value="Chromosomal replication initiator protein DnaA"/>
    <property type="match status" value="1"/>
</dbReference>
<dbReference type="FunFam" id="3.30.300.180:FF:000001">
    <property type="entry name" value="Chromosomal replication initiator protein DnaA"/>
    <property type="match status" value="1"/>
</dbReference>
<dbReference type="FunFam" id="3.40.50.300:FF:000103">
    <property type="entry name" value="Chromosomal replication initiator protein DnaA"/>
    <property type="match status" value="1"/>
</dbReference>
<dbReference type="Gene3D" id="1.10.1750.10">
    <property type="match status" value="1"/>
</dbReference>
<dbReference type="Gene3D" id="1.10.8.60">
    <property type="match status" value="1"/>
</dbReference>
<dbReference type="Gene3D" id="3.30.300.180">
    <property type="match status" value="1"/>
</dbReference>
<dbReference type="Gene3D" id="3.40.50.300">
    <property type="entry name" value="P-loop containing nucleotide triphosphate hydrolases"/>
    <property type="match status" value="1"/>
</dbReference>
<dbReference type="HAMAP" id="MF_00377">
    <property type="entry name" value="DnaA_bact"/>
    <property type="match status" value="1"/>
</dbReference>
<dbReference type="InterPro" id="IPR003593">
    <property type="entry name" value="AAA+_ATPase"/>
</dbReference>
<dbReference type="InterPro" id="IPR001957">
    <property type="entry name" value="Chromosome_initiator_DnaA"/>
</dbReference>
<dbReference type="InterPro" id="IPR020591">
    <property type="entry name" value="Chromosome_initiator_DnaA-like"/>
</dbReference>
<dbReference type="InterPro" id="IPR018312">
    <property type="entry name" value="Chromosome_initiator_DnaA_CS"/>
</dbReference>
<dbReference type="InterPro" id="IPR013159">
    <property type="entry name" value="DnaA_C"/>
</dbReference>
<dbReference type="InterPro" id="IPR013317">
    <property type="entry name" value="DnaA_dom"/>
</dbReference>
<dbReference type="InterPro" id="IPR024633">
    <property type="entry name" value="DnaA_N_dom"/>
</dbReference>
<dbReference type="InterPro" id="IPR038454">
    <property type="entry name" value="DnaA_N_sf"/>
</dbReference>
<dbReference type="InterPro" id="IPR055199">
    <property type="entry name" value="Hda_lid"/>
</dbReference>
<dbReference type="InterPro" id="IPR027417">
    <property type="entry name" value="P-loop_NTPase"/>
</dbReference>
<dbReference type="InterPro" id="IPR010921">
    <property type="entry name" value="Trp_repressor/repl_initiator"/>
</dbReference>
<dbReference type="NCBIfam" id="TIGR00362">
    <property type="entry name" value="DnaA"/>
    <property type="match status" value="1"/>
</dbReference>
<dbReference type="PANTHER" id="PTHR30050">
    <property type="entry name" value="CHROMOSOMAL REPLICATION INITIATOR PROTEIN DNAA"/>
    <property type="match status" value="1"/>
</dbReference>
<dbReference type="PANTHER" id="PTHR30050:SF2">
    <property type="entry name" value="CHROMOSOMAL REPLICATION INITIATOR PROTEIN DNAA"/>
    <property type="match status" value="1"/>
</dbReference>
<dbReference type="Pfam" id="PF00308">
    <property type="entry name" value="Bac_DnaA"/>
    <property type="match status" value="1"/>
</dbReference>
<dbReference type="Pfam" id="PF08299">
    <property type="entry name" value="Bac_DnaA_C"/>
    <property type="match status" value="1"/>
</dbReference>
<dbReference type="Pfam" id="PF11638">
    <property type="entry name" value="DnaA_N"/>
    <property type="match status" value="1"/>
</dbReference>
<dbReference type="Pfam" id="PF22688">
    <property type="entry name" value="Hda_lid"/>
    <property type="match status" value="1"/>
</dbReference>
<dbReference type="PRINTS" id="PR00051">
    <property type="entry name" value="DNAA"/>
</dbReference>
<dbReference type="SMART" id="SM00382">
    <property type="entry name" value="AAA"/>
    <property type="match status" value="1"/>
</dbReference>
<dbReference type="SMART" id="SM00760">
    <property type="entry name" value="Bac_DnaA_C"/>
    <property type="match status" value="1"/>
</dbReference>
<dbReference type="SUPFAM" id="SSF52540">
    <property type="entry name" value="P-loop containing nucleoside triphosphate hydrolases"/>
    <property type="match status" value="1"/>
</dbReference>
<dbReference type="SUPFAM" id="SSF48295">
    <property type="entry name" value="TrpR-like"/>
    <property type="match status" value="1"/>
</dbReference>
<dbReference type="PROSITE" id="PS01008">
    <property type="entry name" value="DNAA"/>
    <property type="match status" value="1"/>
</dbReference>
<gene>
    <name evidence="1" type="primary">dnaA</name>
    <name type="ordered locus">SO_0008</name>
</gene>
<accession>Q8EKT2</accession>
<protein>
    <recommendedName>
        <fullName evidence="1">Chromosomal replication initiator protein DnaA</fullName>
    </recommendedName>
</protein>
<proteinExistence type="inferred from homology"/>
<organism>
    <name type="scientific">Shewanella oneidensis (strain ATCC 700550 / JCM 31522 / CIP 106686 / LMG 19005 / NCIMB 14063 / MR-1)</name>
    <dbReference type="NCBI Taxonomy" id="211586"/>
    <lineage>
        <taxon>Bacteria</taxon>
        <taxon>Pseudomonadati</taxon>
        <taxon>Pseudomonadota</taxon>
        <taxon>Gammaproteobacteria</taxon>
        <taxon>Alteromonadales</taxon>
        <taxon>Shewanellaceae</taxon>
        <taxon>Shewanella</taxon>
    </lineage>
</organism>